<reference key="1">
    <citation type="journal article" date="1996" name="Yeast">
        <title>Sequencing analysis of a 40.2 kb fragment of yeast chromosome X reveals 19 open reading frames including URA2 (5' end), TRK1, PBS2, SPT10, GCD14, RPE1, PHO86, NCA3, ASF1, CCT7, GZF3, two tRNA genes, three remnant delta elements and a Ty4 transposon.</title>
        <authorList>
            <person name="Cziepluch C."/>
            <person name="Kordes E."/>
            <person name="Pujol A."/>
            <person name="Jauniaux J.-C."/>
        </authorList>
    </citation>
    <scope>NUCLEOTIDE SEQUENCE [GENOMIC DNA]</scope>
    <source>
        <strain>ATCC 96604 / S288c / FY1679</strain>
    </source>
</reference>
<reference key="2">
    <citation type="journal article" date="1996" name="EMBO J.">
        <title>Complete nucleotide sequence of Saccharomyces cerevisiae chromosome X.</title>
        <authorList>
            <person name="Galibert F."/>
            <person name="Alexandraki D."/>
            <person name="Baur A."/>
            <person name="Boles E."/>
            <person name="Chalwatzis N."/>
            <person name="Chuat J.-C."/>
            <person name="Coster F."/>
            <person name="Cziepluch C."/>
            <person name="de Haan M."/>
            <person name="Domdey H."/>
            <person name="Durand P."/>
            <person name="Entian K.-D."/>
            <person name="Gatius M."/>
            <person name="Goffeau A."/>
            <person name="Grivell L.A."/>
            <person name="Hennemann A."/>
            <person name="Herbert C.J."/>
            <person name="Heumann K."/>
            <person name="Hilger F."/>
            <person name="Hollenberg C.P."/>
            <person name="Huang M.-E."/>
            <person name="Jacq C."/>
            <person name="Jauniaux J.-C."/>
            <person name="Katsoulou C."/>
            <person name="Kirchrath L."/>
            <person name="Kleine K."/>
            <person name="Kordes E."/>
            <person name="Koetter P."/>
            <person name="Liebl S."/>
            <person name="Louis E.J."/>
            <person name="Manus V."/>
            <person name="Mewes H.-W."/>
            <person name="Miosga T."/>
            <person name="Obermaier B."/>
            <person name="Perea J."/>
            <person name="Pohl T.M."/>
            <person name="Portetelle D."/>
            <person name="Pujol A."/>
            <person name="Purnelle B."/>
            <person name="Ramezani Rad M."/>
            <person name="Rasmussen S.W."/>
            <person name="Rose M."/>
            <person name="Rossau R."/>
            <person name="Schaaff-Gerstenschlaeger I."/>
            <person name="Smits P.H.M."/>
            <person name="Scarcez T."/>
            <person name="Soriano N."/>
            <person name="To Van D."/>
            <person name="Tzermia M."/>
            <person name="Van Broekhoven A."/>
            <person name="Vandenbol M."/>
            <person name="Wedler H."/>
            <person name="von Wettstein D."/>
            <person name="Wambutt R."/>
            <person name="Zagulski M."/>
            <person name="Zollner A."/>
            <person name="Karpfinger-Hartl L."/>
        </authorList>
    </citation>
    <scope>NUCLEOTIDE SEQUENCE [LARGE SCALE GENOMIC DNA]</scope>
    <source>
        <strain>ATCC 204508 / S288c</strain>
    </source>
</reference>
<reference key="3">
    <citation type="journal article" date="2014" name="G3 (Bethesda)">
        <title>The reference genome sequence of Saccharomyces cerevisiae: Then and now.</title>
        <authorList>
            <person name="Engel S.R."/>
            <person name="Dietrich F.S."/>
            <person name="Fisk D.G."/>
            <person name="Binkley G."/>
            <person name="Balakrishnan R."/>
            <person name="Costanzo M.C."/>
            <person name="Dwight S.S."/>
            <person name="Hitz B.C."/>
            <person name="Karra K."/>
            <person name="Nash R.S."/>
            <person name="Weng S."/>
            <person name="Wong E.D."/>
            <person name="Lloyd P."/>
            <person name="Skrzypek M.S."/>
            <person name="Miyasato S.R."/>
            <person name="Simison M."/>
            <person name="Cherry J.M."/>
        </authorList>
    </citation>
    <scope>GENOME REANNOTATION</scope>
    <source>
        <strain>ATCC 204508 / S288c</strain>
    </source>
</reference>
<name>YJL9_YEAST</name>
<gene>
    <name type="ordered locus">YJL119C</name>
    <name type="ORF">J0738</name>
</gene>
<proteinExistence type="uncertain"/>
<feature type="chain" id="PRO_0000203043" description="Putative uncharacterized protein YJL119C">
    <location>
        <begin position="1"/>
        <end position="107"/>
    </location>
</feature>
<dbReference type="EMBL" id="Z49394">
    <property type="protein sequence ID" value="CAA89413.1"/>
    <property type="molecule type" value="Genomic_DNA"/>
</dbReference>
<dbReference type="PIR" id="S56900">
    <property type="entry name" value="S56900"/>
</dbReference>
<dbReference type="STRING" id="4932.YJL119C"/>
<dbReference type="PaxDb" id="4932-YJL119C"/>
<dbReference type="EnsemblFungi" id="YJL119C_mRNA">
    <property type="protein sequence ID" value="YJL119C"/>
    <property type="gene ID" value="YJL119C"/>
</dbReference>
<dbReference type="AGR" id="SGD:S000003655"/>
<dbReference type="SGD" id="S000003655">
    <property type="gene designation" value="YJL119C"/>
</dbReference>
<dbReference type="HOGENOM" id="CLU_2212010_0_0_1"/>
<accession>P47021</accession>
<sequence length="107" mass="12425">MNHLTTVLAARKTCVVREATNLYTVDTERRINKMGRDEEKKWRSRGGHWCMDDSIIQFTTFNQSCTLMGSTTATRANNETEKHEAITVFFVVFLYINKASVKFFFFA</sequence>
<evidence type="ECO:0000305" key="1">
    <source>
    </source>
</evidence>
<protein>
    <recommendedName>
        <fullName>Putative uncharacterized protein YJL119C</fullName>
    </recommendedName>
</protein>
<organism>
    <name type="scientific">Saccharomyces cerevisiae (strain ATCC 204508 / S288c)</name>
    <name type="common">Baker's yeast</name>
    <dbReference type="NCBI Taxonomy" id="559292"/>
    <lineage>
        <taxon>Eukaryota</taxon>
        <taxon>Fungi</taxon>
        <taxon>Dikarya</taxon>
        <taxon>Ascomycota</taxon>
        <taxon>Saccharomycotina</taxon>
        <taxon>Saccharomycetes</taxon>
        <taxon>Saccharomycetales</taxon>
        <taxon>Saccharomycetaceae</taxon>
        <taxon>Saccharomyces</taxon>
    </lineage>
</organism>
<comment type="caution">
    <text evidence="1">Product of a dubious gene prediction unlikely to encode a functional protein. Because of that it is not part of the S.cerevisiae S288c complete/reference proteome set.</text>
</comment>